<accession>Q639D2</accession>
<organism>
    <name type="scientific">Bacillus cereus (strain ZK / E33L)</name>
    <dbReference type="NCBI Taxonomy" id="288681"/>
    <lineage>
        <taxon>Bacteria</taxon>
        <taxon>Bacillati</taxon>
        <taxon>Bacillota</taxon>
        <taxon>Bacilli</taxon>
        <taxon>Bacillales</taxon>
        <taxon>Bacillaceae</taxon>
        <taxon>Bacillus</taxon>
        <taxon>Bacillus cereus group</taxon>
    </lineage>
</organism>
<protein>
    <recommendedName>
        <fullName evidence="1">Arsenate reductase</fullName>
        <ecNumber evidence="1">1.20.4.4</ecNumber>
    </recommendedName>
</protein>
<dbReference type="EC" id="1.20.4.4" evidence="1"/>
<dbReference type="EMBL" id="CP000001">
    <property type="protein sequence ID" value="AAU17365.1"/>
    <property type="molecule type" value="Genomic_DNA"/>
</dbReference>
<dbReference type="RefSeq" id="WP_000428362.1">
    <property type="nucleotide sequence ID" value="NC_006274.1"/>
</dbReference>
<dbReference type="SMR" id="Q639D2"/>
<dbReference type="KEGG" id="bcz:BCE33L2898"/>
<dbReference type="PATRIC" id="fig|288681.22.peg.2551"/>
<dbReference type="Proteomes" id="UP000002612">
    <property type="component" value="Chromosome"/>
</dbReference>
<dbReference type="GO" id="GO:0005737">
    <property type="term" value="C:cytoplasm"/>
    <property type="evidence" value="ECO:0007669"/>
    <property type="project" value="UniProtKB-SubCell"/>
</dbReference>
<dbReference type="GO" id="GO:0030612">
    <property type="term" value="F:arsenate reductase (thioredoxin) activity"/>
    <property type="evidence" value="ECO:0007669"/>
    <property type="project" value="UniProtKB-UniRule"/>
</dbReference>
<dbReference type="GO" id="GO:0004725">
    <property type="term" value="F:protein tyrosine phosphatase activity"/>
    <property type="evidence" value="ECO:0007669"/>
    <property type="project" value="InterPro"/>
</dbReference>
<dbReference type="GO" id="GO:0046685">
    <property type="term" value="P:response to arsenic-containing substance"/>
    <property type="evidence" value="ECO:0007669"/>
    <property type="project" value="UniProtKB-KW"/>
</dbReference>
<dbReference type="CDD" id="cd16345">
    <property type="entry name" value="LMWP_ArsC"/>
    <property type="match status" value="1"/>
</dbReference>
<dbReference type="FunFam" id="3.40.50.2300:FF:000237">
    <property type="entry name" value="Arsenate reductase"/>
    <property type="match status" value="1"/>
</dbReference>
<dbReference type="Gene3D" id="3.40.50.2300">
    <property type="match status" value="1"/>
</dbReference>
<dbReference type="HAMAP" id="MF_01624">
    <property type="entry name" value="Arsenate_reduct"/>
    <property type="match status" value="1"/>
</dbReference>
<dbReference type="InterPro" id="IPR014064">
    <property type="entry name" value="Arsenate_reductase_ArsC"/>
</dbReference>
<dbReference type="InterPro" id="IPR023485">
    <property type="entry name" value="Ptyr_pPase"/>
</dbReference>
<dbReference type="InterPro" id="IPR036196">
    <property type="entry name" value="Ptyr_pPase_sf"/>
</dbReference>
<dbReference type="NCBIfam" id="TIGR02691">
    <property type="entry name" value="arsC_pI258_fam"/>
    <property type="match status" value="1"/>
</dbReference>
<dbReference type="NCBIfam" id="NF010053">
    <property type="entry name" value="PRK13530.1"/>
    <property type="match status" value="1"/>
</dbReference>
<dbReference type="PANTHER" id="PTHR43428">
    <property type="entry name" value="ARSENATE REDUCTASE"/>
    <property type="match status" value="1"/>
</dbReference>
<dbReference type="PANTHER" id="PTHR43428:SF1">
    <property type="entry name" value="ARSENATE REDUCTASE"/>
    <property type="match status" value="1"/>
</dbReference>
<dbReference type="Pfam" id="PF01451">
    <property type="entry name" value="LMWPc"/>
    <property type="match status" value="1"/>
</dbReference>
<dbReference type="SMART" id="SM00226">
    <property type="entry name" value="LMWPc"/>
    <property type="match status" value="1"/>
</dbReference>
<dbReference type="SUPFAM" id="SSF52788">
    <property type="entry name" value="Phosphotyrosine protein phosphatases I"/>
    <property type="match status" value="1"/>
</dbReference>
<proteinExistence type="inferred from homology"/>
<feature type="chain" id="PRO_0000162515" description="Arsenate reductase">
    <location>
        <begin position="1"/>
        <end position="134"/>
    </location>
</feature>
<feature type="active site" description="Nucleophile" evidence="1">
    <location>
        <position position="11"/>
    </location>
</feature>
<feature type="active site" description="Nucleophile" evidence="1">
    <location>
        <position position="83"/>
    </location>
</feature>
<feature type="active site" description="Nucleophile" evidence="1">
    <location>
        <position position="90"/>
    </location>
</feature>
<feature type="disulfide bond" description="Redox-active; alternate" evidence="1">
    <location>
        <begin position="11"/>
        <end position="83"/>
    </location>
</feature>
<feature type="disulfide bond" description="Redox-active; alternate" evidence="1">
    <location>
        <begin position="83"/>
        <end position="90"/>
    </location>
</feature>
<evidence type="ECO:0000255" key="1">
    <source>
        <dbReference type="HAMAP-Rule" id="MF_01624"/>
    </source>
</evidence>
<keyword id="KW-0059">Arsenical resistance</keyword>
<keyword id="KW-0963">Cytoplasm</keyword>
<keyword id="KW-1015">Disulfide bond</keyword>
<keyword id="KW-0560">Oxidoreductase</keyword>
<keyword id="KW-0676">Redox-active center</keyword>
<gene>
    <name evidence="1" type="primary">arsC</name>
    <name type="ordered locus">BCE33L2898</name>
</gene>
<name>ARSC_BACCZ</name>
<sequence length="134" mass="15078">MENKKTIYFLCTGNSCRSQMAEAWGKQYLGDKWNVYSAGIEVHGVNPNAIKAMNEVNIDITNQTSDIIDANILNRADLVVTLCSHADSVCPSTPPDVNRVHWGFDDPAGKEWSEFQRVRDEIGERIKRFSETGE</sequence>
<comment type="function">
    <text evidence="1">Catalyzes the reduction of arsenate [As(V)] to arsenite [As(III)].</text>
</comment>
<comment type="catalytic activity">
    <reaction evidence="1">
        <text>arsenate + [thioredoxin]-dithiol + H(+) = arsenite + [thioredoxin]-disulfide + H2O</text>
        <dbReference type="Rhea" id="RHEA:43848"/>
        <dbReference type="Rhea" id="RHEA-COMP:10698"/>
        <dbReference type="Rhea" id="RHEA-COMP:10700"/>
        <dbReference type="ChEBI" id="CHEBI:15377"/>
        <dbReference type="ChEBI" id="CHEBI:15378"/>
        <dbReference type="ChEBI" id="CHEBI:29242"/>
        <dbReference type="ChEBI" id="CHEBI:29950"/>
        <dbReference type="ChEBI" id="CHEBI:48597"/>
        <dbReference type="ChEBI" id="CHEBI:50058"/>
        <dbReference type="EC" id="1.20.4.4"/>
    </reaction>
</comment>
<comment type="subcellular location">
    <subcellularLocation>
        <location evidence="1">Cytoplasm</location>
    </subcellularLocation>
</comment>
<comment type="similarity">
    <text evidence="1">Belongs to the low molecular weight phosphotyrosine protein phosphatase family. Thioredoxin-coupled ArsC subfamily.</text>
</comment>
<reference key="1">
    <citation type="journal article" date="2006" name="J. Bacteriol.">
        <title>Pathogenomic sequence analysis of Bacillus cereus and Bacillus thuringiensis isolates closely related to Bacillus anthracis.</title>
        <authorList>
            <person name="Han C.S."/>
            <person name="Xie G."/>
            <person name="Challacombe J.F."/>
            <person name="Altherr M.R."/>
            <person name="Bhotika S.S."/>
            <person name="Bruce D."/>
            <person name="Campbell C.S."/>
            <person name="Campbell M.L."/>
            <person name="Chen J."/>
            <person name="Chertkov O."/>
            <person name="Cleland C."/>
            <person name="Dimitrijevic M."/>
            <person name="Doggett N.A."/>
            <person name="Fawcett J.J."/>
            <person name="Glavina T."/>
            <person name="Goodwin L.A."/>
            <person name="Hill K.K."/>
            <person name="Hitchcock P."/>
            <person name="Jackson P.J."/>
            <person name="Keim P."/>
            <person name="Kewalramani A.R."/>
            <person name="Longmire J."/>
            <person name="Lucas S."/>
            <person name="Malfatti S."/>
            <person name="McMurry K."/>
            <person name="Meincke L.J."/>
            <person name="Misra M."/>
            <person name="Moseman B.L."/>
            <person name="Mundt M."/>
            <person name="Munk A.C."/>
            <person name="Okinaka R.T."/>
            <person name="Parson-Quintana B."/>
            <person name="Reilly L.P."/>
            <person name="Richardson P."/>
            <person name="Robinson D.L."/>
            <person name="Rubin E."/>
            <person name="Saunders E."/>
            <person name="Tapia R."/>
            <person name="Tesmer J.G."/>
            <person name="Thayer N."/>
            <person name="Thompson L.S."/>
            <person name="Tice H."/>
            <person name="Ticknor L.O."/>
            <person name="Wills P.L."/>
            <person name="Brettin T.S."/>
            <person name="Gilna P."/>
        </authorList>
    </citation>
    <scope>NUCLEOTIDE SEQUENCE [LARGE SCALE GENOMIC DNA]</scope>
    <source>
        <strain>ZK / E33L</strain>
    </source>
</reference>